<organism>
    <name type="scientific">Chlamydomonas reinhardtii</name>
    <name type="common">Chlamydomonas smithii</name>
    <dbReference type="NCBI Taxonomy" id="3055"/>
    <lineage>
        <taxon>Eukaryota</taxon>
        <taxon>Viridiplantae</taxon>
        <taxon>Chlorophyta</taxon>
        <taxon>core chlorophytes</taxon>
        <taxon>Chlorophyceae</taxon>
        <taxon>CS clade</taxon>
        <taxon>Chlamydomonadales</taxon>
        <taxon>Chlamydomonadaceae</taxon>
        <taxon>Chlamydomonas</taxon>
    </lineage>
</organism>
<evidence type="ECO:0000255" key="1">
    <source>
        <dbReference type="HAMAP-Rule" id="MF_03140"/>
    </source>
</evidence>
<evidence type="ECO:0000256" key="2">
    <source>
        <dbReference type="SAM" id="MobiDB-lite"/>
    </source>
</evidence>
<accession>A8J2Z9</accession>
<comment type="function">
    <text evidence="1">Structure-specific nuclease with 5'-flap endonuclease and 5'-3' exonuclease activities involved in DNA replication and repair. During DNA replication, cleaves the 5'-overhanging flap structure that is generated by displacement synthesis when DNA polymerase encounters the 5'-end of a downstream Okazaki fragment. It enters the flap from the 5'-end and then tracks to cleave the flap base, leaving a nick for ligation. Also involved in the long patch base excision repair (LP-BER) pathway, by cleaving within the apurinic/apyrimidinic (AP) site-terminated flap. Acts as a genome stabilization factor that prevents flaps from equilibrating into structures that lead to duplications and deletions. Also possesses 5'-3' exonuclease activity on nicked or gapped double-stranded DNA, and exhibits RNase H activity. Also involved in replication and repair of rDNA and in repairing mitochondrial DNA.</text>
</comment>
<comment type="cofactor">
    <cofactor evidence="1">
        <name>Mg(2+)</name>
        <dbReference type="ChEBI" id="CHEBI:18420"/>
    </cofactor>
    <text evidence="1">Binds 2 magnesium ions per subunit. They probably participate in the reaction catalyzed by the enzyme. May bind an additional third magnesium ion after substrate binding.</text>
</comment>
<comment type="subunit">
    <text evidence="1">Interacts with PCNA. Three molecules of FEN1 bind to one PCNA trimer with each molecule binding to one PCNA monomer. PCNA stimulates the nuclease activity without altering cleavage specificity.</text>
</comment>
<comment type="subcellular location">
    <subcellularLocation>
        <location evidence="1">Nucleus</location>
        <location evidence="1">Nucleolus</location>
    </subcellularLocation>
    <subcellularLocation>
        <location evidence="1">Nucleus</location>
        <location evidence="1">Nucleoplasm</location>
    </subcellularLocation>
    <subcellularLocation>
        <location evidence="1">Mitochondrion</location>
    </subcellularLocation>
    <text evidence="1">Resides mostly in the nucleoli and relocalizes to the nucleoplasm upon DNA damage.</text>
</comment>
<comment type="PTM">
    <text evidence="1">Phosphorylated. Phosphorylation upon DNA damage induces relocalization to the nuclear plasma.</text>
</comment>
<comment type="similarity">
    <text evidence="1">Belongs to the XPG/RAD2 endonuclease family. FEN1 subfamily.</text>
</comment>
<keyword id="KW-0227">DNA damage</keyword>
<keyword id="KW-0234">DNA repair</keyword>
<keyword id="KW-0235">DNA replication</keyword>
<keyword id="KW-0255">Endonuclease</keyword>
<keyword id="KW-0269">Exonuclease</keyword>
<keyword id="KW-0378">Hydrolase</keyword>
<keyword id="KW-0460">Magnesium</keyword>
<keyword id="KW-0479">Metal-binding</keyword>
<keyword id="KW-0496">Mitochondrion</keyword>
<keyword id="KW-0540">Nuclease</keyword>
<keyword id="KW-0539">Nucleus</keyword>
<keyword id="KW-0597">Phosphoprotein</keyword>
<proteinExistence type="inferred from homology"/>
<sequence>MGIHGLTKLLGDNAPGCIKETKFENLFGRKVAVDASMHIYQFMVVVGRQGDQLLTNEAGEITSHLQGMFFRTAKMLEAGIKPVYVFDGKPPQLKQDQLAQRTERRADANEALEKAKEAGDQEAIEKYSKRSVRVTREHNDECKRLLRLMGVPVVEAPTEAEAQCAEMAKSGLVYGLATEDMDALTFGAPRVIRHLMAPSSQNVPVQEFDREVALRELELTDDQFIDLCILMGCDYCGTIRGIGAVRALQMIKKHGSIEGMLKELDPAKYPVPEPFPHKESHEFFKNPEVTPSAEIPPLKWTAPDEEGLVQFLVNEKQFNEQRVRNAVGRIKANKTKANQGRLESFFTSLPKPATADKAKPKEDDKKRKAGAAAGGKDAKGGAAAKKGKFGVGGGKK</sequence>
<dbReference type="EC" id="3.1.-.-" evidence="1"/>
<dbReference type="EMBL" id="DS496134">
    <property type="protein sequence ID" value="EDP01507.1"/>
    <property type="molecule type" value="Genomic_DNA"/>
</dbReference>
<dbReference type="RefSeq" id="XP_001695720.1">
    <property type="nucleotide sequence ID" value="XM_001695668.1"/>
</dbReference>
<dbReference type="SMR" id="A8J2Z9"/>
<dbReference type="PaxDb" id="3055-EDP01507"/>
<dbReference type="EnsemblPlants" id="PNW84478">
    <property type="protein sequence ID" value="PNW84478"/>
    <property type="gene ID" value="CHLRE_03g145687v5"/>
</dbReference>
<dbReference type="GeneID" id="5721250"/>
<dbReference type="Gramene" id="PNW84478">
    <property type="protein sequence ID" value="PNW84478"/>
    <property type="gene ID" value="CHLRE_03g145687v5"/>
</dbReference>
<dbReference type="KEGG" id="cre:CHLRE_03g145687v5"/>
<dbReference type="eggNOG" id="KOG2519">
    <property type="taxonomic scope" value="Eukaryota"/>
</dbReference>
<dbReference type="HOGENOM" id="CLU_032444_2_0_1"/>
<dbReference type="OMA" id="MGIPWVQ"/>
<dbReference type="OrthoDB" id="1937206at2759"/>
<dbReference type="GO" id="GO:0005739">
    <property type="term" value="C:mitochondrion"/>
    <property type="evidence" value="ECO:0007669"/>
    <property type="project" value="UniProtKB-SubCell"/>
</dbReference>
<dbReference type="GO" id="GO:0005730">
    <property type="term" value="C:nucleolus"/>
    <property type="evidence" value="ECO:0007669"/>
    <property type="project" value="UniProtKB-SubCell"/>
</dbReference>
<dbReference type="GO" id="GO:0005654">
    <property type="term" value="C:nucleoplasm"/>
    <property type="evidence" value="ECO:0007669"/>
    <property type="project" value="UniProtKB-SubCell"/>
</dbReference>
<dbReference type="GO" id="GO:0008409">
    <property type="term" value="F:5'-3' exonuclease activity"/>
    <property type="evidence" value="ECO:0007669"/>
    <property type="project" value="UniProtKB-UniRule"/>
</dbReference>
<dbReference type="GO" id="GO:0017108">
    <property type="term" value="F:5'-flap endonuclease activity"/>
    <property type="evidence" value="ECO:0007669"/>
    <property type="project" value="UniProtKB-UniRule"/>
</dbReference>
<dbReference type="GO" id="GO:0003677">
    <property type="term" value="F:DNA binding"/>
    <property type="evidence" value="ECO:0007669"/>
    <property type="project" value="UniProtKB-UniRule"/>
</dbReference>
<dbReference type="GO" id="GO:0000287">
    <property type="term" value="F:magnesium ion binding"/>
    <property type="evidence" value="ECO:0007669"/>
    <property type="project" value="UniProtKB-UniRule"/>
</dbReference>
<dbReference type="GO" id="GO:0006284">
    <property type="term" value="P:base-excision repair"/>
    <property type="evidence" value="ECO:0007669"/>
    <property type="project" value="UniProtKB-UniRule"/>
</dbReference>
<dbReference type="GO" id="GO:0043137">
    <property type="term" value="P:DNA replication, removal of RNA primer"/>
    <property type="evidence" value="ECO:0007669"/>
    <property type="project" value="UniProtKB-UniRule"/>
</dbReference>
<dbReference type="CDD" id="cd09907">
    <property type="entry name" value="H3TH_FEN1-Euk"/>
    <property type="match status" value="1"/>
</dbReference>
<dbReference type="CDD" id="cd09867">
    <property type="entry name" value="PIN_FEN1"/>
    <property type="match status" value="1"/>
</dbReference>
<dbReference type="FunFam" id="1.10.150.20:FF:000009">
    <property type="entry name" value="Flap endonuclease 1"/>
    <property type="match status" value="1"/>
</dbReference>
<dbReference type="FunFam" id="3.40.50.1010:FF:000016">
    <property type="entry name" value="Flap endonuclease 1"/>
    <property type="match status" value="1"/>
</dbReference>
<dbReference type="Gene3D" id="1.10.150.20">
    <property type="entry name" value="5' to 3' exonuclease, C-terminal subdomain"/>
    <property type="match status" value="1"/>
</dbReference>
<dbReference type="Gene3D" id="3.40.50.1010">
    <property type="entry name" value="5'-nuclease"/>
    <property type="match status" value="1"/>
</dbReference>
<dbReference type="HAMAP" id="MF_00614">
    <property type="entry name" value="Fen"/>
    <property type="match status" value="1"/>
</dbReference>
<dbReference type="InterPro" id="IPR036279">
    <property type="entry name" value="5-3_exonuclease_C_sf"/>
</dbReference>
<dbReference type="InterPro" id="IPR023426">
    <property type="entry name" value="Flap_endonuc"/>
</dbReference>
<dbReference type="InterPro" id="IPR008918">
    <property type="entry name" value="HhH2"/>
</dbReference>
<dbReference type="InterPro" id="IPR029060">
    <property type="entry name" value="PIN-like_dom_sf"/>
</dbReference>
<dbReference type="InterPro" id="IPR006086">
    <property type="entry name" value="XPG-I_dom"/>
</dbReference>
<dbReference type="InterPro" id="IPR006084">
    <property type="entry name" value="XPG/Rad2"/>
</dbReference>
<dbReference type="InterPro" id="IPR019974">
    <property type="entry name" value="XPG_CS"/>
</dbReference>
<dbReference type="InterPro" id="IPR006085">
    <property type="entry name" value="XPG_DNA_repair_N"/>
</dbReference>
<dbReference type="PANTHER" id="PTHR11081:SF9">
    <property type="entry name" value="FLAP ENDONUCLEASE 1"/>
    <property type="match status" value="1"/>
</dbReference>
<dbReference type="PANTHER" id="PTHR11081">
    <property type="entry name" value="FLAP ENDONUCLEASE FAMILY MEMBER"/>
    <property type="match status" value="1"/>
</dbReference>
<dbReference type="Pfam" id="PF00867">
    <property type="entry name" value="XPG_I"/>
    <property type="match status" value="1"/>
</dbReference>
<dbReference type="Pfam" id="PF00752">
    <property type="entry name" value="XPG_N"/>
    <property type="match status" value="1"/>
</dbReference>
<dbReference type="PRINTS" id="PR00853">
    <property type="entry name" value="XPGRADSUPER"/>
</dbReference>
<dbReference type="SMART" id="SM00279">
    <property type="entry name" value="HhH2"/>
    <property type="match status" value="1"/>
</dbReference>
<dbReference type="SMART" id="SM00484">
    <property type="entry name" value="XPGI"/>
    <property type="match status" value="1"/>
</dbReference>
<dbReference type="SMART" id="SM00485">
    <property type="entry name" value="XPGN"/>
    <property type="match status" value="1"/>
</dbReference>
<dbReference type="SUPFAM" id="SSF47807">
    <property type="entry name" value="5' to 3' exonuclease, C-terminal subdomain"/>
    <property type="match status" value="1"/>
</dbReference>
<dbReference type="SUPFAM" id="SSF88723">
    <property type="entry name" value="PIN domain-like"/>
    <property type="match status" value="1"/>
</dbReference>
<dbReference type="PROSITE" id="PS00841">
    <property type="entry name" value="XPG_1"/>
    <property type="match status" value="1"/>
</dbReference>
<dbReference type="PROSITE" id="PS00842">
    <property type="entry name" value="XPG_2"/>
    <property type="match status" value="1"/>
</dbReference>
<feature type="chain" id="PRO_0000403519" description="Flap endonuclease 1">
    <location>
        <begin position="1"/>
        <end position="396"/>
    </location>
</feature>
<feature type="region of interest" description="N-domain">
    <location>
        <begin position="1"/>
        <end position="105"/>
    </location>
</feature>
<feature type="region of interest" description="I-domain">
    <location>
        <begin position="123"/>
        <end position="254"/>
    </location>
</feature>
<feature type="region of interest" description="Interaction with PCNA" evidence="1">
    <location>
        <begin position="338"/>
        <end position="346"/>
    </location>
</feature>
<feature type="region of interest" description="Disordered" evidence="2">
    <location>
        <begin position="341"/>
        <end position="396"/>
    </location>
</feature>
<feature type="compositionally biased region" description="Basic and acidic residues" evidence="2">
    <location>
        <begin position="354"/>
        <end position="366"/>
    </location>
</feature>
<feature type="compositionally biased region" description="Low complexity" evidence="2">
    <location>
        <begin position="370"/>
        <end position="384"/>
    </location>
</feature>
<feature type="binding site" evidence="1">
    <location>
        <position position="34"/>
    </location>
    <ligand>
        <name>Mg(2+)</name>
        <dbReference type="ChEBI" id="CHEBI:18420"/>
        <label>1</label>
    </ligand>
</feature>
<feature type="binding site" evidence="1">
    <location>
        <position position="71"/>
    </location>
    <ligand>
        <name>DNA</name>
        <dbReference type="ChEBI" id="CHEBI:16991"/>
    </ligand>
</feature>
<feature type="binding site" evidence="1">
    <location>
        <position position="87"/>
    </location>
    <ligand>
        <name>Mg(2+)</name>
        <dbReference type="ChEBI" id="CHEBI:18420"/>
        <label>1</label>
    </ligand>
</feature>
<feature type="binding site" evidence="1">
    <location>
        <position position="159"/>
    </location>
    <ligand>
        <name>DNA</name>
        <dbReference type="ChEBI" id="CHEBI:16991"/>
    </ligand>
</feature>
<feature type="binding site" evidence="1">
    <location>
        <position position="159"/>
    </location>
    <ligand>
        <name>Mg(2+)</name>
        <dbReference type="ChEBI" id="CHEBI:18420"/>
        <label>1</label>
    </ligand>
</feature>
<feature type="binding site" evidence="1">
    <location>
        <position position="161"/>
    </location>
    <ligand>
        <name>Mg(2+)</name>
        <dbReference type="ChEBI" id="CHEBI:18420"/>
        <label>1</label>
    </ligand>
</feature>
<feature type="binding site" evidence="1">
    <location>
        <position position="180"/>
    </location>
    <ligand>
        <name>Mg(2+)</name>
        <dbReference type="ChEBI" id="CHEBI:18420"/>
        <label>2</label>
    </ligand>
</feature>
<feature type="binding site" evidence="1">
    <location>
        <position position="182"/>
    </location>
    <ligand>
        <name>Mg(2+)</name>
        <dbReference type="ChEBI" id="CHEBI:18420"/>
        <label>2</label>
    </ligand>
</feature>
<feature type="binding site" evidence="1">
    <location>
        <position position="232"/>
    </location>
    <ligand>
        <name>DNA</name>
        <dbReference type="ChEBI" id="CHEBI:16991"/>
    </ligand>
</feature>
<feature type="binding site" evidence="1">
    <location>
        <position position="234"/>
    </location>
    <ligand>
        <name>DNA</name>
        <dbReference type="ChEBI" id="CHEBI:16991"/>
    </ligand>
</feature>
<feature type="binding site" evidence="1">
    <location>
        <position position="234"/>
    </location>
    <ligand>
        <name>Mg(2+)</name>
        <dbReference type="ChEBI" id="CHEBI:18420"/>
        <label>2</label>
    </ligand>
</feature>
<name>FEN1_CHLRE</name>
<protein>
    <recommendedName>
        <fullName evidence="1">Flap endonuclease 1</fullName>
        <shortName evidence="1">FEN-1</shortName>
        <ecNumber evidence="1">3.1.-.-</ecNumber>
    </recommendedName>
    <alternativeName>
        <fullName evidence="1">Flap structure-specific endonuclease 1</fullName>
    </alternativeName>
</protein>
<gene>
    <name evidence="1" type="primary">FEN1</name>
    <name type="ORF">CHLREDRAFT_130834</name>
</gene>
<reference key="1">
    <citation type="journal article" date="2007" name="Science">
        <title>The Chlamydomonas genome reveals the evolution of key animal and plant functions.</title>
        <authorList>
            <person name="Merchant S.S."/>
            <person name="Prochnik S.E."/>
            <person name="Vallon O."/>
            <person name="Harris E.H."/>
            <person name="Karpowicz S.J."/>
            <person name="Witman G.B."/>
            <person name="Terry A."/>
            <person name="Salamov A."/>
            <person name="Fritz-Laylin L.K."/>
            <person name="Marechal-Drouard L."/>
            <person name="Marshall W.F."/>
            <person name="Qu L.H."/>
            <person name="Nelson D.R."/>
            <person name="Sanderfoot A.A."/>
            <person name="Spalding M.H."/>
            <person name="Kapitonov V.V."/>
            <person name="Ren Q."/>
            <person name="Ferris P."/>
            <person name="Lindquist E."/>
            <person name="Shapiro H."/>
            <person name="Lucas S.M."/>
            <person name="Grimwood J."/>
            <person name="Schmutz J."/>
            <person name="Cardol P."/>
            <person name="Cerutti H."/>
            <person name="Chanfreau G."/>
            <person name="Chen C.L."/>
            <person name="Cognat V."/>
            <person name="Croft M.T."/>
            <person name="Dent R."/>
            <person name="Dutcher S."/>
            <person name="Fernandez E."/>
            <person name="Fukuzawa H."/>
            <person name="Gonzalez-Ballester D."/>
            <person name="Gonzalez-Halphen D."/>
            <person name="Hallmann A."/>
            <person name="Hanikenne M."/>
            <person name="Hippler M."/>
            <person name="Inwood W."/>
            <person name="Jabbari K."/>
            <person name="Kalanon M."/>
            <person name="Kuras R."/>
            <person name="Lefebvre P.A."/>
            <person name="Lemaire S.D."/>
            <person name="Lobanov A.V."/>
            <person name="Lohr M."/>
            <person name="Manuell A."/>
            <person name="Meier I."/>
            <person name="Mets L."/>
            <person name="Mittag M."/>
            <person name="Mittelmeier T."/>
            <person name="Moroney J.V."/>
            <person name="Moseley J."/>
            <person name="Napoli C."/>
            <person name="Nedelcu A.M."/>
            <person name="Niyogi K."/>
            <person name="Novoselov S.V."/>
            <person name="Paulsen I.T."/>
            <person name="Pazour G.J."/>
            <person name="Purton S."/>
            <person name="Ral J.P."/>
            <person name="Riano-Pachon D.M."/>
            <person name="Riekhof W."/>
            <person name="Rymarquis L."/>
            <person name="Schroda M."/>
            <person name="Stern D."/>
            <person name="Umen J."/>
            <person name="Willows R."/>
            <person name="Wilson N."/>
            <person name="Zimmer S.L."/>
            <person name="Allmer J."/>
            <person name="Balk J."/>
            <person name="Bisova K."/>
            <person name="Chen C.J."/>
            <person name="Elias M."/>
            <person name="Gendler K."/>
            <person name="Hauser C."/>
            <person name="Lamb M.R."/>
            <person name="Ledford H."/>
            <person name="Long J.C."/>
            <person name="Minagawa J."/>
            <person name="Page M.D."/>
            <person name="Pan J."/>
            <person name="Pootakham W."/>
            <person name="Roje S."/>
            <person name="Rose A."/>
            <person name="Stahlberg E."/>
            <person name="Terauchi A.M."/>
            <person name="Yang P."/>
            <person name="Ball S."/>
            <person name="Bowler C."/>
            <person name="Dieckmann C.L."/>
            <person name="Gladyshev V.N."/>
            <person name="Green P."/>
            <person name="Jorgensen R."/>
            <person name="Mayfield S."/>
            <person name="Mueller-Roeber B."/>
            <person name="Rajamani S."/>
            <person name="Sayre R.T."/>
            <person name="Brokstein P."/>
            <person name="Dubchak I."/>
            <person name="Goodstein D."/>
            <person name="Hornick L."/>
            <person name="Huang Y.W."/>
            <person name="Jhaveri J."/>
            <person name="Luo Y."/>
            <person name="Martinez D."/>
            <person name="Ngau W.C."/>
            <person name="Otillar B."/>
            <person name="Poliakov A."/>
            <person name="Porter A."/>
            <person name="Szajkowski L."/>
            <person name="Werner G."/>
            <person name="Zhou K."/>
            <person name="Grigoriev I.V."/>
            <person name="Rokhsar D.S."/>
            <person name="Grossman A.R."/>
        </authorList>
    </citation>
    <scope>NUCLEOTIDE SEQUENCE [LARGE SCALE GENOMIC DNA]</scope>
    <source>
        <strain>CC-503</strain>
        <strain>cw92</strain>
    </source>
</reference>